<keyword id="KW-0210">Decarboxylase</keyword>
<keyword id="KW-0456">Lyase</keyword>
<keyword id="KW-0665">Pyrimidine biosynthesis</keyword>
<keyword id="KW-1185">Reference proteome</keyword>
<dbReference type="EC" id="4.1.1.23"/>
<dbReference type="EMBL" id="AL583918">
    <property type="protein sequence ID" value="CAC30045.1"/>
    <property type="molecule type" value="Genomic_DNA"/>
</dbReference>
<dbReference type="PIR" id="A86976">
    <property type="entry name" value="A86976"/>
</dbReference>
<dbReference type="RefSeq" id="NP_301456.1">
    <property type="nucleotide sequence ID" value="NC_002677.1"/>
</dbReference>
<dbReference type="RefSeq" id="WP_010907780.1">
    <property type="nucleotide sequence ID" value="NC_002677.1"/>
</dbReference>
<dbReference type="SMR" id="Q9CCR1"/>
<dbReference type="STRING" id="272631.gene:17574358"/>
<dbReference type="KEGG" id="mle:ML0537"/>
<dbReference type="PATRIC" id="fig|272631.5.peg.938"/>
<dbReference type="Leproma" id="ML0537"/>
<dbReference type="eggNOG" id="COG0284">
    <property type="taxonomic scope" value="Bacteria"/>
</dbReference>
<dbReference type="HOGENOM" id="CLU_060704_0_0_11"/>
<dbReference type="OrthoDB" id="9808470at2"/>
<dbReference type="UniPathway" id="UPA00070">
    <property type="reaction ID" value="UER00120"/>
</dbReference>
<dbReference type="Proteomes" id="UP000000806">
    <property type="component" value="Chromosome"/>
</dbReference>
<dbReference type="GO" id="GO:0004590">
    <property type="term" value="F:orotidine-5'-phosphate decarboxylase activity"/>
    <property type="evidence" value="ECO:0007669"/>
    <property type="project" value="UniProtKB-UniRule"/>
</dbReference>
<dbReference type="GO" id="GO:0006207">
    <property type="term" value="P:'de novo' pyrimidine nucleobase biosynthetic process"/>
    <property type="evidence" value="ECO:0007669"/>
    <property type="project" value="InterPro"/>
</dbReference>
<dbReference type="GO" id="GO:0044205">
    <property type="term" value="P:'de novo' UMP biosynthetic process"/>
    <property type="evidence" value="ECO:0007669"/>
    <property type="project" value="UniProtKB-UniRule"/>
</dbReference>
<dbReference type="CDD" id="cd04725">
    <property type="entry name" value="OMP_decarboxylase_like"/>
    <property type="match status" value="1"/>
</dbReference>
<dbReference type="Gene3D" id="3.20.20.70">
    <property type="entry name" value="Aldolase class I"/>
    <property type="match status" value="1"/>
</dbReference>
<dbReference type="HAMAP" id="MF_01215">
    <property type="entry name" value="OMPdecase_type2"/>
    <property type="match status" value="1"/>
</dbReference>
<dbReference type="InterPro" id="IPR013785">
    <property type="entry name" value="Aldolase_TIM"/>
</dbReference>
<dbReference type="InterPro" id="IPR018089">
    <property type="entry name" value="OMPdecase_AS"/>
</dbReference>
<dbReference type="InterPro" id="IPR011995">
    <property type="entry name" value="OMPdecase_type-2"/>
</dbReference>
<dbReference type="InterPro" id="IPR001754">
    <property type="entry name" value="OMPdeCOase_dom"/>
</dbReference>
<dbReference type="InterPro" id="IPR011060">
    <property type="entry name" value="RibuloseP-bd_barrel"/>
</dbReference>
<dbReference type="NCBIfam" id="TIGR02127">
    <property type="entry name" value="pyrF_sub2"/>
    <property type="match status" value="1"/>
</dbReference>
<dbReference type="PANTHER" id="PTHR43375">
    <property type="entry name" value="OROTIDINE 5'-PHOSPHATE DECARBOXYLASE"/>
    <property type="match status" value="1"/>
</dbReference>
<dbReference type="PANTHER" id="PTHR43375:SF1">
    <property type="entry name" value="OROTIDINE 5'-PHOSPHATE DECARBOXYLASE"/>
    <property type="match status" value="1"/>
</dbReference>
<dbReference type="Pfam" id="PF00215">
    <property type="entry name" value="OMPdecase"/>
    <property type="match status" value="1"/>
</dbReference>
<dbReference type="SMART" id="SM00934">
    <property type="entry name" value="OMPdecase"/>
    <property type="match status" value="1"/>
</dbReference>
<dbReference type="SUPFAM" id="SSF51366">
    <property type="entry name" value="Ribulose-phoshate binding barrel"/>
    <property type="match status" value="1"/>
</dbReference>
<dbReference type="PROSITE" id="PS00156">
    <property type="entry name" value="OMPDECASE"/>
    <property type="match status" value="1"/>
</dbReference>
<name>PYRF_MYCLE</name>
<accession>Q9CCR1</accession>
<proteinExistence type="inferred from homology"/>
<sequence>MTGFGARLVEATSRRGQLCLGIDPHPELLRAWDLPTTADGLAAFCDICVEAFSGFAIVKPQVAFFEAYGAAGFAVLEYTIAALRSVGVLVLADAKRGDIGSTMAAYAAAWAGNSPLAADAVTASPYLGFGSLRPLLEVAAAHDRGVFVLASTSNLEGATVQRATFDGRIVAQLIVDQAAFVNREMNRSFHRSEPGCLGYVGVVVGATVFGAPDVSALGGPVLVPGVGAQGGHPEALGGLGGAAPGQLLPAVSRAVLRAGPGVSELRAAGEQMRDAVAYLAAV</sequence>
<gene>
    <name type="primary">pyrF</name>
    <name type="ordered locus">ML0537</name>
</gene>
<protein>
    <recommendedName>
        <fullName>Orotidine 5'-phosphate decarboxylase</fullName>
        <ecNumber>4.1.1.23</ecNumber>
    </recommendedName>
    <alternativeName>
        <fullName>OMP decarboxylase</fullName>
        <shortName>OMPDCase</shortName>
        <shortName>OMPdecase</shortName>
    </alternativeName>
</protein>
<feature type="chain" id="PRO_0000134628" description="Orotidine 5'-phosphate decarboxylase">
    <location>
        <begin position="1"/>
        <end position="282"/>
    </location>
</feature>
<feature type="active site" description="Proton donor" evidence="1">
    <location>
        <position position="95"/>
    </location>
</feature>
<evidence type="ECO:0000250" key="1"/>
<evidence type="ECO:0000305" key="2"/>
<reference key="1">
    <citation type="journal article" date="2001" name="Nature">
        <title>Massive gene decay in the leprosy bacillus.</title>
        <authorList>
            <person name="Cole S.T."/>
            <person name="Eiglmeier K."/>
            <person name="Parkhill J."/>
            <person name="James K.D."/>
            <person name="Thomson N.R."/>
            <person name="Wheeler P.R."/>
            <person name="Honore N."/>
            <person name="Garnier T."/>
            <person name="Churcher C.M."/>
            <person name="Harris D.E."/>
            <person name="Mungall K.L."/>
            <person name="Basham D."/>
            <person name="Brown D."/>
            <person name="Chillingworth T."/>
            <person name="Connor R."/>
            <person name="Davies R.M."/>
            <person name="Devlin K."/>
            <person name="Duthoy S."/>
            <person name="Feltwell T."/>
            <person name="Fraser A."/>
            <person name="Hamlin N."/>
            <person name="Holroyd S."/>
            <person name="Hornsby T."/>
            <person name="Jagels K."/>
            <person name="Lacroix C."/>
            <person name="Maclean J."/>
            <person name="Moule S."/>
            <person name="Murphy L.D."/>
            <person name="Oliver K."/>
            <person name="Quail M.A."/>
            <person name="Rajandream M.A."/>
            <person name="Rutherford K.M."/>
            <person name="Rutter S."/>
            <person name="Seeger K."/>
            <person name="Simon S."/>
            <person name="Simmonds M."/>
            <person name="Skelton J."/>
            <person name="Squares R."/>
            <person name="Squares S."/>
            <person name="Stevens K."/>
            <person name="Taylor K."/>
            <person name="Whitehead S."/>
            <person name="Woodward J.R."/>
            <person name="Barrell B.G."/>
        </authorList>
    </citation>
    <scope>NUCLEOTIDE SEQUENCE [LARGE SCALE GENOMIC DNA]</scope>
    <source>
        <strain>TN</strain>
    </source>
</reference>
<organism>
    <name type="scientific">Mycobacterium leprae (strain TN)</name>
    <dbReference type="NCBI Taxonomy" id="272631"/>
    <lineage>
        <taxon>Bacteria</taxon>
        <taxon>Bacillati</taxon>
        <taxon>Actinomycetota</taxon>
        <taxon>Actinomycetes</taxon>
        <taxon>Mycobacteriales</taxon>
        <taxon>Mycobacteriaceae</taxon>
        <taxon>Mycobacterium</taxon>
    </lineage>
</organism>
<comment type="catalytic activity">
    <reaction>
        <text>orotidine 5'-phosphate + H(+) = UMP + CO2</text>
        <dbReference type="Rhea" id="RHEA:11596"/>
        <dbReference type="ChEBI" id="CHEBI:15378"/>
        <dbReference type="ChEBI" id="CHEBI:16526"/>
        <dbReference type="ChEBI" id="CHEBI:57538"/>
        <dbReference type="ChEBI" id="CHEBI:57865"/>
        <dbReference type="EC" id="4.1.1.23"/>
    </reaction>
</comment>
<comment type="pathway">
    <text>Pyrimidine metabolism; UMP biosynthesis via de novo pathway; UMP from orotate: step 2/2.</text>
</comment>
<comment type="similarity">
    <text evidence="2">Belongs to the OMP decarboxylase family. Type 2 subfamily.</text>
</comment>